<feature type="chain" id="PRO_0000175477" description="DNA-directed RNA polymerase subunit alpha">
    <location>
        <begin position="1"/>
        <end position="337"/>
    </location>
</feature>
<feature type="region of interest" description="Alpha N-terminal domain (alpha-NTD)" evidence="1">
    <location>
        <begin position="1"/>
        <end position="233"/>
    </location>
</feature>
<feature type="region of interest" description="Alpha C-terminal domain (alpha-CTD)" evidence="1">
    <location>
        <begin position="264"/>
        <end position="337"/>
    </location>
</feature>
<sequence>MVREEVAGSTQTLQWKCVESRVDSKRLYYGRFILSPLRKGQADTVGIALRRALLGETEGTCITHAKFGSVPHEYSTIAGIEESVQEILLNLKEIVLRSNLYGVRTASICVKGPRYITAQDIILPPSVEIVDTAQPIANLTEPTDFRIELRIKRDRGYHTEVRKNTQDGSYPIDAVSMPVRNVNYSIFACGNGNAKYEILFLEIWTNGSLTPKEALYEASRNLIDLFLPFLHTEEEGTRFQENKNRFTSPLLSFQKRLTNLKKNKKRIPLNCIFIDQLELPSRTYNCLKRANIHTLLDLLSKTEEDLMRIDSFRMQDGKQIWDTLEKHLPMDLPKNKF</sequence>
<gene>
    <name evidence="1" type="primary">rpoA</name>
    <name type="ORF">PA101</name>
</gene>
<dbReference type="EC" id="2.7.7.6" evidence="1"/>
<dbReference type="EMBL" id="AY522331">
    <property type="protein sequence ID" value="AAS46204.1"/>
    <property type="molecule type" value="Genomic_DNA"/>
</dbReference>
<dbReference type="RefSeq" id="NP_039417.1">
    <property type="nucleotide sequence ID" value="NC_001320.1"/>
</dbReference>
<dbReference type="RefSeq" id="YP_009305335.1">
    <property type="nucleotide sequence ID" value="NC_031333.1"/>
</dbReference>
<dbReference type="SMR" id="P0C498"/>
<dbReference type="GeneID" id="29141403"/>
<dbReference type="GeneID" id="3131431"/>
<dbReference type="KEGG" id="osa:3131431"/>
<dbReference type="GO" id="GO:0009507">
    <property type="term" value="C:chloroplast"/>
    <property type="evidence" value="ECO:0007669"/>
    <property type="project" value="UniProtKB-SubCell"/>
</dbReference>
<dbReference type="GO" id="GO:0000428">
    <property type="term" value="C:DNA-directed RNA polymerase complex"/>
    <property type="evidence" value="ECO:0007669"/>
    <property type="project" value="UniProtKB-KW"/>
</dbReference>
<dbReference type="GO" id="GO:0005739">
    <property type="term" value="C:mitochondrion"/>
    <property type="evidence" value="ECO:0007669"/>
    <property type="project" value="GOC"/>
</dbReference>
<dbReference type="GO" id="GO:0009536">
    <property type="term" value="C:plastid"/>
    <property type="evidence" value="ECO:0000305"/>
    <property type="project" value="Gramene"/>
</dbReference>
<dbReference type="GO" id="GO:0003677">
    <property type="term" value="F:DNA binding"/>
    <property type="evidence" value="ECO:0007669"/>
    <property type="project" value="UniProtKB-UniRule"/>
</dbReference>
<dbReference type="GO" id="GO:0003899">
    <property type="term" value="F:DNA-directed RNA polymerase activity"/>
    <property type="evidence" value="ECO:0007669"/>
    <property type="project" value="UniProtKB-UniRule"/>
</dbReference>
<dbReference type="GO" id="GO:0046983">
    <property type="term" value="F:protein dimerization activity"/>
    <property type="evidence" value="ECO:0007669"/>
    <property type="project" value="InterPro"/>
</dbReference>
<dbReference type="GO" id="GO:0006351">
    <property type="term" value="P:DNA-templated transcription"/>
    <property type="evidence" value="ECO:0007669"/>
    <property type="project" value="UniProtKB-UniRule"/>
</dbReference>
<dbReference type="CDD" id="cd06928">
    <property type="entry name" value="RNAP_alpha_NTD"/>
    <property type="match status" value="1"/>
</dbReference>
<dbReference type="FunFam" id="1.10.150.20:FF:000021">
    <property type="entry name" value="DNA-directed RNA polymerase subunit alpha"/>
    <property type="match status" value="1"/>
</dbReference>
<dbReference type="FunFam" id="2.170.120.12:FF:000001">
    <property type="entry name" value="DNA-directed RNA polymerase subunit alpha"/>
    <property type="match status" value="1"/>
</dbReference>
<dbReference type="Gene3D" id="1.10.150.20">
    <property type="entry name" value="5' to 3' exonuclease, C-terminal subdomain"/>
    <property type="match status" value="1"/>
</dbReference>
<dbReference type="Gene3D" id="2.170.120.12">
    <property type="entry name" value="DNA-directed RNA polymerase, insert domain"/>
    <property type="match status" value="1"/>
</dbReference>
<dbReference type="Gene3D" id="3.30.1360.10">
    <property type="entry name" value="RNA polymerase, RBP11-like subunit"/>
    <property type="match status" value="1"/>
</dbReference>
<dbReference type="HAMAP" id="MF_00059">
    <property type="entry name" value="RNApol_bact_RpoA"/>
    <property type="match status" value="1"/>
</dbReference>
<dbReference type="InterPro" id="IPR011262">
    <property type="entry name" value="DNA-dir_RNA_pol_insert"/>
</dbReference>
<dbReference type="InterPro" id="IPR011263">
    <property type="entry name" value="DNA-dir_RNA_pol_RpoA/D/Rpb3"/>
</dbReference>
<dbReference type="InterPro" id="IPR011773">
    <property type="entry name" value="DNA-dir_RpoA"/>
</dbReference>
<dbReference type="InterPro" id="IPR036603">
    <property type="entry name" value="RBP11-like"/>
</dbReference>
<dbReference type="InterPro" id="IPR011260">
    <property type="entry name" value="RNAP_asu_C"/>
</dbReference>
<dbReference type="InterPro" id="IPR036643">
    <property type="entry name" value="RNApol_insert_sf"/>
</dbReference>
<dbReference type="NCBIfam" id="TIGR02027">
    <property type="entry name" value="rpoA"/>
    <property type="match status" value="1"/>
</dbReference>
<dbReference type="Pfam" id="PF01000">
    <property type="entry name" value="RNA_pol_A_bac"/>
    <property type="match status" value="1"/>
</dbReference>
<dbReference type="Pfam" id="PF03118">
    <property type="entry name" value="RNA_pol_A_CTD"/>
    <property type="match status" value="1"/>
</dbReference>
<dbReference type="Pfam" id="PF01193">
    <property type="entry name" value="RNA_pol_L"/>
    <property type="match status" value="1"/>
</dbReference>
<dbReference type="SMART" id="SM00662">
    <property type="entry name" value="RPOLD"/>
    <property type="match status" value="1"/>
</dbReference>
<dbReference type="SUPFAM" id="SSF47789">
    <property type="entry name" value="C-terminal domain of RNA polymerase alpha subunit"/>
    <property type="match status" value="1"/>
</dbReference>
<dbReference type="SUPFAM" id="SSF56553">
    <property type="entry name" value="Insert subdomain of RNA polymerase alpha subunit"/>
    <property type="match status" value="1"/>
</dbReference>
<dbReference type="SUPFAM" id="SSF55257">
    <property type="entry name" value="RBP11-like subunits of RNA polymerase"/>
    <property type="match status" value="1"/>
</dbReference>
<keyword id="KW-0150">Chloroplast</keyword>
<keyword id="KW-0240">DNA-directed RNA polymerase</keyword>
<keyword id="KW-0548">Nucleotidyltransferase</keyword>
<keyword id="KW-0934">Plastid</keyword>
<keyword id="KW-0804">Transcription</keyword>
<keyword id="KW-0808">Transferase</keyword>
<geneLocation type="chloroplast"/>
<proteinExistence type="inferred from homology"/>
<protein>
    <recommendedName>
        <fullName evidence="1">DNA-directed RNA polymerase subunit alpha</fullName>
        <shortName evidence="1">PEP</shortName>
        <ecNumber evidence="1">2.7.7.6</ecNumber>
    </recommendedName>
    <alternativeName>
        <fullName evidence="1">Plastid-encoded RNA polymerase subunit alpha</fullName>
        <shortName evidence="1">RNA polymerase subunit alpha</shortName>
    </alternativeName>
</protein>
<name>RPOA_ORYSA</name>
<evidence type="ECO:0000255" key="1">
    <source>
        <dbReference type="HAMAP-Rule" id="MF_00059"/>
    </source>
</evidence>
<organism>
    <name type="scientific">Oryza sativa</name>
    <name type="common">Rice</name>
    <dbReference type="NCBI Taxonomy" id="4530"/>
    <lineage>
        <taxon>Eukaryota</taxon>
        <taxon>Viridiplantae</taxon>
        <taxon>Streptophyta</taxon>
        <taxon>Embryophyta</taxon>
        <taxon>Tracheophyta</taxon>
        <taxon>Spermatophyta</taxon>
        <taxon>Magnoliopsida</taxon>
        <taxon>Liliopsida</taxon>
        <taxon>Poales</taxon>
        <taxon>Poaceae</taxon>
        <taxon>BOP clade</taxon>
        <taxon>Oryzoideae</taxon>
        <taxon>Oryzeae</taxon>
        <taxon>Oryzinae</taxon>
        <taxon>Oryza</taxon>
    </lineage>
</organism>
<accession>P0C498</accession>
<accession>P12090</accession>
<accession>Q6QY54</accession>
<accession>Q6Z507</accession>
<reference key="1">
    <citation type="journal article" date="2004" name="Plant Physiol.">
        <title>A comparison of rice chloroplast genomes.</title>
        <authorList>
            <person name="Tang J."/>
            <person name="Xia H."/>
            <person name="Cao M."/>
            <person name="Zhang X."/>
            <person name="Zeng W."/>
            <person name="Hu S."/>
            <person name="Tong W."/>
            <person name="Wang J."/>
            <person name="Wang J."/>
            <person name="Yu J."/>
            <person name="Yang H."/>
            <person name="Zhu L."/>
        </authorList>
    </citation>
    <scope>NUCLEOTIDE SEQUENCE [LARGE SCALE GENOMIC DNA]</scope>
    <source>
        <strain>cv. PA64s</strain>
    </source>
</reference>
<comment type="function">
    <text evidence="1">DNA-dependent RNA polymerase catalyzes the transcription of DNA into RNA using the four ribonucleoside triphosphates as substrates.</text>
</comment>
<comment type="catalytic activity">
    <reaction evidence="1">
        <text>RNA(n) + a ribonucleoside 5'-triphosphate = RNA(n+1) + diphosphate</text>
        <dbReference type="Rhea" id="RHEA:21248"/>
        <dbReference type="Rhea" id="RHEA-COMP:14527"/>
        <dbReference type="Rhea" id="RHEA-COMP:17342"/>
        <dbReference type="ChEBI" id="CHEBI:33019"/>
        <dbReference type="ChEBI" id="CHEBI:61557"/>
        <dbReference type="ChEBI" id="CHEBI:140395"/>
        <dbReference type="EC" id="2.7.7.6"/>
    </reaction>
</comment>
<comment type="subunit">
    <text evidence="1">In plastids the minimal PEP RNA polymerase catalytic core is composed of four subunits: alpha, beta, beta', and beta''. When a (nuclear-encoded) sigma factor is associated with the core the holoenzyme is formed, which can initiate transcription.</text>
</comment>
<comment type="subcellular location">
    <subcellularLocation>
        <location>Plastid</location>
        <location>Chloroplast</location>
    </subcellularLocation>
</comment>
<comment type="domain">
    <text evidence="1">The N-terminal domain is essential for RNAP assembly and basal transcription, whereas the C-terminal domain is involved in interaction with transcriptional regulators and with upstream promoter elements.</text>
</comment>
<comment type="similarity">
    <text evidence="1">Belongs to the RNA polymerase alpha chain family.</text>
</comment>